<name>SIGA_LACLC</name>
<accession>P58290</accession>
<reference key="1">
    <citation type="journal article" date="1993" name="Biochim. Biophys. Acta">
        <title>Nucleotide sequence of the Lactococcus lactis NCDO 763 (ML3) rpoD gene.</title>
        <authorList>
            <person name="Gansel X."/>
            <person name="Hartke A."/>
            <person name="Boutibonnes P."/>
            <person name="Auffray Y."/>
        </authorList>
    </citation>
    <scope>NUCLEOTIDE SEQUENCE [GENOMIC DNA]</scope>
    <source>
        <strain>NCDO 763 / ML3</strain>
    </source>
</reference>
<protein>
    <recommendedName>
        <fullName evidence="1">RNA polymerase sigma factor SigA</fullName>
    </recommendedName>
    <alternativeName>
        <fullName>Sigma-42</fullName>
    </alternativeName>
</protein>
<gene>
    <name evidence="1" type="primary">sigA</name>
    <name type="synonym">rpoD</name>
</gene>
<proteinExistence type="inferred from homology"/>
<sequence>AYEKAVKGYITKRKPLGEALDEEIMDELSVKFGIVDDALEDLFKQIQDAGISIVDKDGNPSPLALVTDEIEKEEVSDTAMDEIVTNVRIDDPVRMYLKEIGRYPLISLDEETKLAEAIIAGGEGAEFAKQMLAEANLRLVVSIAKRYSGRGMQFLDLIQEGNMGLMKAVDKFDQTKGFKFSTYATWWIRQAITRAIADQARTIRIPVHMVETINKLIRVQRNLLQELGRDPSPEEIGKELHMAPDKVREVLKIAQEPVSLETPIGEEDDSHLGDFIEDDVIESPVDYTNRILLREQLDEVMDTLTDREENVLRMRFGLDDGRMHTLEDVGKQFKVTRERIRQIEAKAIKKLRHPRRSKPLRDFM</sequence>
<organism>
    <name type="scientific">Lactococcus lactis subsp. cremoris</name>
    <name type="common">Streptococcus cremoris</name>
    <dbReference type="NCBI Taxonomy" id="1359"/>
    <lineage>
        <taxon>Bacteria</taxon>
        <taxon>Bacillati</taxon>
        <taxon>Bacillota</taxon>
        <taxon>Bacilli</taxon>
        <taxon>Lactobacillales</taxon>
        <taxon>Streptococcaceae</taxon>
        <taxon>Lactococcus</taxon>
    </lineage>
</organism>
<comment type="function">
    <text evidence="1">Sigma factors are initiation factors that promote the attachment of RNA polymerase to specific initiation sites and are then released. This sigma factor is the primary sigma factor during exponential growth.</text>
</comment>
<comment type="subunit">
    <text evidence="1">Interacts transiently with the RNA polymerase catalytic core.</text>
</comment>
<comment type="subcellular location">
    <subcellularLocation>
        <location evidence="1">Cytoplasm</location>
    </subcellularLocation>
</comment>
<comment type="similarity">
    <text evidence="1">Belongs to the sigma-70 factor family. RpoD/SigA subfamily.</text>
</comment>
<comment type="sequence caution" evidence="2">
    <conflict type="erroneous initiation">
        <sequence resource="EMBL-CDS" id="CAA50594"/>
    </conflict>
</comment>
<keyword id="KW-0963">Cytoplasm</keyword>
<keyword id="KW-0238">DNA-binding</keyword>
<keyword id="KW-0731">Sigma factor</keyword>
<keyword id="KW-0804">Transcription</keyword>
<keyword id="KW-0805">Transcription regulation</keyword>
<feature type="chain" id="PRO_0000093893" description="RNA polymerase sigma factor SigA">
    <location>
        <begin position="1" status="less than"/>
        <end position="364"/>
    </location>
</feature>
<feature type="DNA-binding region" description="H-T-H motif" evidence="1">
    <location>
        <begin position="326"/>
        <end position="345"/>
    </location>
</feature>
<feature type="region of interest" description="Sigma-70 factor domain-2" evidence="1">
    <location>
        <begin position="132"/>
        <end position="202"/>
    </location>
</feature>
<feature type="region of interest" description="Sigma-70 factor domain-3" evidence="1">
    <location>
        <begin position="211"/>
        <end position="287"/>
    </location>
</feature>
<feature type="region of interest" description="Sigma-70 factor domain-4" evidence="1">
    <location>
        <begin position="300"/>
        <end position="353"/>
    </location>
</feature>
<feature type="short sequence motif" description="Interaction with polymerase core subunit RpoC">
    <location>
        <begin position="156"/>
        <end position="159"/>
    </location>
</feature>
<feature type="non-terminal residue">
    <location>
        <position position="1"/>
    </location>
</feature>
<dbReference type="EMBL" id="X71493">
    <property type="protein sequence ID" value="CAA50594.1"/>
    <property type="status" value="ALT_INIT"/>
    <property type="molecule type" value="Genomic_DNA"/>
</dbReference>
<dbReference type="SMR" id="P58290"/>
<dbReference type="GO" id="GO:0005737">
    <property type="term" value="C:cytoplasm"/>
    <property type="evidence" value="ECO:0007669"/>
    <property type="project" value="UniProtKB-SubCell"/>
</dbReference>
<dbReference type="GO" id="GO:0003677">
    <property type="term" value="F:DNA binding"/>
    <property type="evidence" value="ECO:0007669"/>
    <property type="project" value="UniProtKB-KW"/>
</dbReference>
<dbReference type="GO" id="GO:0016987">
    <property type="term" value="F:sigma factor activity"/>
    <property type="evidence" value="ECO:0007669"/>
    <property type="project" value="UniProtKB-KW"/>
</dbReference>
<dbReference type="GO" id="GO:0006352">
    <property type="term" value="P:DNA-templated transcription initiation"/>
    <property type="evidence" value="ECO:0007669"/>
    <property type="project" value="InterPro"/>
</dbReference>
<dbReference type="CDD" id="cd06171">
    <property type="entry name" value="Sigma70_r4"/>
    <property type="match status" value="1"/>
</dbReference>
<dbReference type="FunFam" id="1.10.10.10:FF:000002">
    <property type="entry name" value="RNA polymerase sigma factor SigA"/>
    <property type="match status" value="1"/>
</dbReference>
<dbReference type="FunFam" id="1.10.10.10:FF:000004">
    <property type="entry name" value="RNA polymerase sigma factor SigA"/>
    <property type="match status" value="1"/>
</dbReference>
<dbReference type="FunFam" id="1.10.601.10:FF:000001">
    <property type="entry name" value="RNA polymerase sigma factor SigA"/>
    <property type="match status" value="1"/>
</dbReference>
<dbReference type="Gene3D" id="1.20.120.1810">
    <property type="match status" value="1"/>
</dbReference>
<dbReference type="Gene3D" id="1.10.601.10">
    <property type="entry name" value="RNA Polymerase Primary Sigma Factor"/>
    <property type="match status" value="1"/>
</dbReference>
<dbReference type="Gene3D" id="1.10.10.10">
    <property type="entry name" value="Winged helix-like DNA-binding domain superfamily/Winged helix DNA-binding domain"/>
    <property type="match status" value="2"/>
</dbReference>
<dbReference type="HAMAP" id="MF_00963">
    <property type="entry name" value="Sigma70_RpoD_SigA"/>
    <property type="match status" value="1"/>
</dbReference>
<dbReference type="InterPro" id="IPR014284">
    <property type="entry name" value="RNA_pol_sigma-70_dom"/>
</dbReference>
<dbReference type="InterPro" id="IPR000943">
    <property type="entry name" value="RNA_pol_sigma70"/>
</dbReference>
<dbReference type="InterPro" id="IPR009042">
    <property type="entry name" value="RNA_pol_sigma70_r1_2"/>
</dbReference>
<dbReference type="InterPro" id="IPR007627">
    <property type="entry name" value="RNA_pol_sigma70_r2"/>
</dbReference>
<dbReference type="InterPro" id="IPR007624">
    <property type="entry name" value="RNA_pol_sigma70_r3"/>
</dbReference>
<dbReference type="InterPro" id="IPR007630">
    <property type="entry name" value="RNA_pol_sigma70_r4"/>
</dbReference>
<dbReference type="InterPro" id="IPR013325">
    <property type="entry name" value="RNA_pol_sigma_r2"/>
</dbReference>
<dbReference type="InterPro" id="IPR013324">
    <property type="entry name" value="RNA_pol_sigma_r3/r4-like"/>
</dbReference>
<dbReference type="InterPro" id="IPR012760">
    <property type="entry name" value="RNA_pol_sigma_RpoD_C"/>
</dbReference>
<dbReference type="InterPro" id="IPR050239">
    <property type="entry name" value="Sigma-70_RNA_pol_init_factors"/>
</dbReference>
<dbReference type="InterPro" id="IPR028630">
    <property type="entry name" value="Sigma70_RpoD"/>
</dbReference>
<dbReference type="InterPro" id="IPR036388">
    <property type="entry name" value="WH-like_DNA-bd_sf"/>
</dbReference>
<dbReference type="NCBIfam" id="NF006666">
    <property type="entry name" value="PRK09210.1"/>
    <property type="match status" value="1"/>
</dbReference>
<dbReference type="NCBIfam" id="TIGR02393">
    <property type="entry name" value="RpoD_Cterm"/>
    <property type="match status" value="1"/>
</dbReference>
<dbReference type="NCBIfam" id="TIGR02937">
    <property type="entry name" value="sigma70-ECF"/>
    <property type="match status" value="1"/>
</dbReference>
<dbReference type="PANTHER" id="PTHR30603">
    <property type="entry name" value="RNA POLYMERASE SIGMA FACTOR RPO"/>
    <property type="match status" value="1"/>
</dbReference>
<dbReference type="PANTHER" id="PTHR30603:SF60">
    <property type="entry name" value="RNA POLYMERASE SIGMA FACTOR RPOD"/>
    <property type="match status" value="1"/>
</dbReference>
<dbReference type="Pfam" id="PF00140">
    <property type="entry name" value="Sigma70_r1_2"/>
    <property type="match status" value="1"/>
</dbReference>
<dbReference type="Pfam" id="PF04542">
    <property type="entry name" value="Sigma70_r2"/>
    <property type="match status" value="1"/>
</dbReference>
<dbReference type="Pfam" id="PF04539">
    <property type="entry name" value="Sigma70_r3"/>
    <property type="match status" value="1"/>
</dbReference>
<dbReference type="Pfam" id="PF04545">
    <property type="entry name" value="Sigma70_r4"/>
    <property type="match status" value="1"/>
</dbReference>
<dbReference type="PRINTS" id="PR00046">
    <property type="entry name" value="SIGMA70FCT"/>
</dbReference>
<dbReference type="SUPFAM" id="SSF88946">
    <property type="entry name" value="Sigma2 domain of RNA polymerase sigma factors"/>
    <property type="match status" value="1"/>
</dbReference>
<dbReference type="SUPFAM" id="SSF88659">
    <property type="entry name" value="Sigma3 and sigma4 domains of RNA polymerase sigma factors"/>
    <property type="match status" value="2"/>
</dbReference>
<dbReference type="PROSITE" id="PS00715">
    <property type="entry name" value="SIGMA70_1"/>
    <property type="match status" value="1"/>
</dbReference>
<dbReference type="PROSITE" id="PS00716">
    <property type="entry name" value="SIGMA70_2"/>
    <property type="match status" value="1"/>
</dbReference>
<evidence type="ECO:0000255" key="1">
    <source>
        <dbReference type="HAMAP-Rule" id="MF_00963"/>
    </source>
</evidence>
<evidence type="ECO:0000305" key="2"/>